<protein>
    <recommendedName>
        <fullName evidence="1">Ribosome-recycling factor</fullName>
        <shortName evidence="1">RRF</shortName>
    </recommendedName>
    <alternativeName>
        <fullName evidence="1">Ribosome-releasing factor</fullName>
    </alternativeName>
</protein>
<name>RRF_ALIF1</name>
<evidence type="ECO:0000255" key="1">
    <source>
        <dbReference type="HAMAP-Rule" id="MF_00040"/>
    </source>
</evidence>
<feature type="chain" id="PRO_0000167575" description="Ribosome-recycling factor">
    <location>
        <begin position="1"/>
        <end position="185"/>
    </location>
</feature>
<keyword id="KW-0963">Cytoplasm</keyword>
<keyword id="KW-0648">Protein biosynthesis</keyword>
<keyword id="KW-1185">Reference proteome</keyword>
<reference key="1">
    <citation type="journal article" date="2005" name="Proc. Natl. Acad. Sci. U.S.A.">
        <title>Complete genome sequence of Vibrio fischeri: a symbiotic bacterium with pathogenic congeners.</title>
        <authorList>
            <person name="Ruby E.G."/>
            <person name="Urbanowski M."/>
            <person name="Campbell J."/>
            <person name="Dunn A."/>
            <person name="Faini M."/>
            <person name="Gunsalus R."/>
            <person name="Lostroh P."/>
            <person name="Lupp C."/>
            <person name="McCann J."/>
            <person name="Millikan D."/>
            <person name="Schaefer A."/>
            <person name="Stabb E."/>
            <person name="Stevens A."/>
            <person name="Visick K."/>
            <person name="Whistler C."/>
            <person name="Greenberg E.P."/>
        </authorList>
    </citation>
    <scope>NUCLEOTIDE SEQUENCE [LARGE SCALE GENOMIC DNA]</scope>
    <source>
        <strain>ATCC 700601 / ES114</strain>
    </source>
</reference>
<dbReference type="EMBL" id="CP000020">
    <property type="protein sequence ID" value="AAW86454.1"/>
    <property type="molecule type" value="Genomic_DNA"/>
</dbReference>
<dbReference type="RefSeq" id="WP_011262432.1">
    <property type="nucleotide sequence ID" value="NC_006840.2"/>
</dbReference>
<dbReference type="RefSeq" id="YP_205342.1">
    <property type="nucleotide sequence ID" value="NC_006840.2"/>
</dbReference>
<dbReference type="SMR" id="Q5E3E2"/>
<dbReference type="STRING" id="312309.VF_1959"/>
<dbReference type="EnsemblBacteria" id="AAW86454">
    <property type="protein sequence ID" value="AAW86454"/>
    <property type="gene ID" value="VF_1959"/>
</dbReference>
<dbReference type="GeneID" id="54164655"/>
<dbReference type="KEGG" id="vfi:VF_1959"/>
<dbReference type="PATRIC" id="fig|312309.11.peg.1986"/>
<dbReference type="eggNOG" id="COG0233">
    <property type="taxonomic scope" value="Bacteria"/>
</dbReference>
<dbReference type="HOGENOM" id="CLU_073981_2_1_6"/>
<dbReference type="OrthoDB" id="9804006at2"/>
<dbReference type="Proteomes" id="UP000000537">
    <property type="component" value="Chromosome I"/>
</dbReference>
<dbReference type="GO" id="GO:0005829">
    <property type="term" value="C:cytosol"/>
    <property type="evidence" value="ECO:0007669"/>
    <property type="project" value="GOC"/>
</dbReference>
<dbReference type="GO" id="GO:0043023">
    <property type="term" value="F:ribosomal large subunit binding"/>
    <property type="evidence" value="ECO:0007669"/>
    <property type="project" value="TreeGrafter"/>
</dbReference>
<dbReference type="GO" id="GO:0002184">
    <property type="term" value="P:cytoplasmic translational termination"/>
    <property type="evidence" value="ECO:0007669"/>
    <property type="project" value="TreeGrafter"/>
</dbReference>
<dbReference type="CDD" id="cd00520">
    <property type="entry name" value="RRF"/>
    <property type="match status" value="1"/>
</dbReference>
<dbReference type="FunFam" id="1.10.132.20:FF:000001">
    <property type="entry name" value="Ribosome-recycling factor"/>
    <property type="match status" value="1"/>
</dbReference>
<dbReference type="FunFam" id="3.30.1360.40:FF:000001">
    <property type="entry name" value="Ribosome-recycling factor"/>
    <property type="match status" value="1"/>
</dbReference>
<dbReference type="Gene3D" id="3.30.1360.40">
    <property type="match status" value="1"/>
</dbReference>
<dbReference type="Gene3D" id="1.10.132.20">
    <property type="entry name" value="Ribosome-recycling factor"/>
    <property type="match status" value="1"/>
</dbReference>
<dbReference type="HAMAP" id="MF_00040">
    <property type="entry name" value="RRF"/>
    <property type="match status" value="1"/>
</dbReference>
<dbReference type="InterPro" id="IPR002661">
    <property type="entry name" value="Ribosome_recyc_fac"/>
</dbReference>
<dbReference type="InterPro" id="IPR023584">
    <property type="entry name" value="Ribosome_recyc_fac_dom"/>
</dbReference>
<dbReference type="InterPro" id="IPR036191">
    <property type="entry name" value="RRF_sf"/>
</dbReference>
<dbReference type="NCBIfam" id="TIGR00496">
    <property type="entry name" value="frr"/>
    <property type="match status" value="1"/>
</dbReference>
<dbReference type="PANTHER" id="PTHR20982:SF3">
    <property type="entry name" value="MITOCHONDRIAL RIBOSOME RECYCLING FACTOR PSEUDO 1"/>
    <property type="match status" value="1"/>
</dbReference>
<dbReference type="PANTHER" id="PTHR20982">
    <property type="entry name" value="RIBOSOME RECYCLING FACTOR"/>
    <property type="match status" value="1"/>
</dbReference>
<dbReference type="Pfam" id="PF01765">
    <property type="entry name" value="RRF"/>
    <property type="match status" value="1"/>
</dbReference>
<dbReference type="SUPFAM" id="SSF55194">
    <property type="entry name" value="Ribosome recycling factor, RRF"/>
    <property type="match status" value="1"/>
</dbReference>
<proteinExistence type="inferred from homology"/>
<gene>
    <name evidence="1" type="primary">frr</name>
    <name type="ordered locus">VF_1959</name>
</gene>
<organism>
    <name type="scientific">Aliivibrio fischeri (strain ATCC 700601 / ES114)</name>
    <name type="common">Vibrio fischeri</name>
    <dbReference type="NCBI Taxonomy" id="312309"/>
    <lineage>
        <taxon>Bacteria</taxon>
        <taxon>Pseudomonadati</taxon>
        <taxon>Pseudomonadota</taxon>
        <taxon>Gammaproteobacteria</taxon>
        <taxon>Vibrionales</taxon>
        <taxon>Vibrionaceae</taxon>
        <taxon>Aliivibrio</taxon>
    </lineage>
</organism>
<comment type="function">
    <text evidence="1">Responsible for the release of ribosomes from messenger RNA at the termination of protein biosynthesis. May increase the efficiency of translation by recycling ribosomes from one round of translation to another.</text>
</comment>
<comment type="subcellular location">
    <subcellularLocation>
        <location evidence="1">Cytoplasm</location>
    </subcellularLocation>
</comment>
<comment type="similarity">
    <text evidence="1">Belongs to the RRF family.</text>
</comment>
<sequence>MINEIKKDAQERMEKSVEALKNNLLKIRTGRAHPSLLSGISVEYYGAQTPLNQVANVVAEDSRTLAITVFDKELAGLVEKAIMMSDLGLNPMSAGTVIRVPLPPLTEERRKDLVKIVRGEAENGRVAIRNIRRDANGDVKALLKEKEISEDDDRRAQDEIQKLTDAAVKSIDEVLAVKEKELMEV</sequence>
<accession>Q5E3E2</accession>